<protein>
    <recommendedName>
        <fullName evidence="1">Small ribosomal subunit protein uS19c</fullName>
    </recommendedName>
    <alternativeName>
        <fullName evidence="2">30S ribosomal protein S19, chloroplastic</fullName>
    </alternativeName>
</protein>
<reference key="1">
    <citation type="submission" date="2007-03" db="EMBL/GenBank/DDBJ databases">
        <title>Sequencing analysis of Lepidium virginicum JO26 chloroplast DNA.</title>
        <authorList>
            <person name="Hosouchi T."/>
            <person name="Tsuruoka H."/>
            <person name="Kotani H."/>
        </authorList>
    </citation>
    <scope>NUCLEOTIDE SEQUENCE [LARGE SCALE GENOMIC DNA]</scope>
</reference>
<comment type="function">
    <text evidence="1">Protein S19 forms a complex with S13 that binds strongly to the 16S ribosomal RNA.</text>
</comment>
<comment type="subcellular location">
    <subcellularLocation>
        <location>Plastid</location>
        <location>Chloroplast</location>
    </subcellularLocation>
</comment>
<comment type="similarity">
    <text evidence="1">Belongs to the universal ribosomal protein uS19 family.</text>
</comment>
<accession>A4QLE6</accession>
<proteinExistence type="inferred from homology"/>
<dbReference type="EMBL" id="AP009374">
    <property type="protein sequence ID" value="BAF50501.1"/>
    <property type="molecule type" value="Genomic_DNA"/>
</dbReference>
<dbReference type="RefSeq" id="YP_001123677.1">
    <property type="nucleotide sequence ID" value="NC_009273.1"/>
</dbReference>
<dbReference type="SMR" id="A4QLE6"/>
<dbReference type="GeneID" id="4962085"/>
<dbReference type="GO" id="GO:0009507">
    <property type="term" value="C:chloroplast"/>
    <property type="evidence" value="ECO:0007669"/>
    <property type="project" value="UniProtKB-SubCell"/>
</dbReference>
<dbReference type="GO" id="GO:0005763">
    <property type="term" value="C:mitochondrial small ribosomal subunit"/>
    <property type="evidence" value="ECO:0007669"/>
    <property type="project" value="TreeGrafter"/>
</dbReference>
<dbReference type="GO" id="GO:0019843">
    <property type="term" value="F:rRNA binding"/>
    <property type="evidence" value="ECO:0007669"/>
    <property type="project" value="UniProtKB-UniRule"/>
</dbReference>
<dbReference type="GO" id="GO:0003735">
    <property type="term" value="F:structural constituent of ribosome"/>
    <property type="evidence" value="ECO:0007669"/>
    <property type="project" value="InterPro"/>
</dbReference>
<dbReference type="GO" id="GO:0000028">
    <property type="term" value="P:ribosomal small subunit assembly"/>
    <property type="evidence" value="ECO:0007669"/>
    <property type="project" value="TreeGrafter"/>
</dbReference>
<dbReference type="GO" id="GO:0006412">
    <property type="term" value="P:translation"/>
    <property type="evidence" value="ECO:0007669"/>
    <property type="project" value="UniProtKB-UniRule"/>
</dbReference>
<dbReference type="FunFam" id="3.30.860.10:FF:000001">
    <property type="entry name" value="30S ribosomal protein S19"/>
    <property type="match status" value="1"/>
</dbReference>
<dbReference type="Gene3D" id="3.30.860.10">
    <property type="entry name" value="30s Ribosomal Protein S19, Chain A"/>
    <property type="match status" value="1"/>
</dbReference>
<dbReference type="HAMAP" id="MF_00531">
    <property type="entry name" value="Ribosomal_uS19"/>
    <property type="match status" value="1"/>
</dbReference>
<dbReference type="InterPro" id="IPR002222">
    <property type="entry name" value="Ribosomal_uS19"/>
</dbReference>
<dbReference type="InterPro" id="IPR005732">
    <property type="entry name" value="Ribosomal_uS19_bac-type"/>
</dbReference>
<dbReference type="InterPro" id="IPR020934">
    <property type="entry name" value="Ribosomal_uS19_CS"/>
</dbReference>
<dbReference type="InterPro" id="IPR023575">
    <property type="entry name" value="Ribosomal_uS19_SF"/>
</dbReference>
<dbReference type="NCBIfam" id="TIGR01050">
    <property type="entry name" value="rpsS_bact"/>
    <property type="match status" value="1"/>
</dbReference>
<dbReference type="PANTHER" id="PTHR11880">
    <property type="entry name" value="RIBOSOMAL PROTEIN S19P FAMILY MEMBER"/>
    <property type="match status" value="1"/>
</dbReference>
<dbReference type="PANTHER" id="PTHR11880:SF8">
    <property type="entry name" value="SMALL RIBOSOMAL SUBUNIT PROTEIN US19M"/>
    <property type="match status" value="1"/>
</dbReference>
<dbReference type="Pfam" id="PF00203">
    <property type="entry name" value="Ribosomal_S19"/>
    <property type="match status" value="1"/>
</dbReference>
<dbReference type="PIRSF" id="PIRSF002144">
    <property type="entry name" value="Ribosomal_S19"/>
    <property type="match status" value="1"/>
</dbReference>
<dbReference type="PRINTS" id="PR00975">
    <property type="entry name" value="RIBOSOMALS19"/>
</dbReference>
<dbReference type="SUPFAM" id="SSF54570">
    <property type="entry name" value="Ribosomal protein S19"/>
    <property type="match status" value="1"/>
</dbReference>
<dbReference type="PROSITE" id="PS00323">
    <property type="entry name" value="RIBOSOMAL_S19"/>
    <property type="match status" value="1"/>
</dbReference>
<keyword id="KW-0150">Chloroplast</keyword>
<keyword id="KW-0934">Plastid</keyword>
<keyword id="KW-0687">Ribonucleoprotein</keyword>
<keyword id="KW-0689">Ribosomal protein</keyword>
<keyword id="KW-0694">RNA-binding</keyword>
<keyword id="KW-0699">rRNA-binding</keyword>
<feature type="chain" id="PRO_0000354359" description="Small ribosomal subunit protein uS19c">
    <location>
        <begin position="1"/>
        <end position="92"/>
    </location>
</feature>
<geneLocation type="chloroplast"/>
<evidence type="ECO:0000255" key="1">
    <source>
        <dbReference type="HAMAP-Rule" id="MF_00531"/>
    </source>
</evidence>
<evidence type="ECO:0000305" key="2"/>
<gene>
    <name evidence="1" type="primary">rps19</name>
</gene>
<organism>
    <name type="scientific">Lepidium virginicum</name>
    <name type="common">Virginia pepperweed</name>
    <dbReference type="NCBI Taxonomy" id="59292"/>
    <lineage>
        <taxon>Eukaryota</taxon>
        <taxon>Viridiplantae</taxon>
        <taxon>Streptophyta</taxon>
        <taxon>Embryophyta</taxon>
        <taxon>Tracheophyta</taxon>
        <taxon>Spermatophyta</taxon>
        <taxon>Magnoliopsida</taxon>
        <taxon>eudicotyledons</taxon>
        <taxon>Gunneridae</taxon>
        <taxon>Pentapetalae</taxon>
        <taxon>rosids</taxon>
        <taxon>malvids</taxon>
        <taxon>Brassicales</taxon>
        <taxon>Brassicaceae</taxon>
        <taxon>Lepidieae</taxon>
        <taxon>Lepidium</taxon>
    </lineage>
</organism>
<sequence length="92" mass="10608">MTRSLKKNPFVAKHLLRKIEKLNTKAEKEIIITWSRASTIIPTMIGHTIAIHNGREHLPVYIIDLMVGHKLGEFSPTINFRGHAKNDNRSRR</sequence>
<name>RR19_LEPVR</name>